<accession>B9E709</accession>
<organism>
    <name type="scientific">Macrococcus caseolyticus (strain JCSC5402)</name>
    <name type="common">Macrococcoides caseolyticum</name>
    <dbReference type="NCBI Taxonomy" id="458233"/>
    <lineage>
        <taxon>Bacteria</taxon>
        <taxon>Bacillati</taxon>
        <taxon>Bacillota</taxon>
        <taxon>Bacilli</taxon>
        <taxon>Bacillales</taxon>
        <taxon>Staphylococcaceae</taxon>
        <taxon>Macrococcoides</taxon>
    </lineage>
</organism>
<comment type="function">
    <text evidence="1">An aminoacyl-tRNA editing enzyme that deacylates mischarged D-aminoacyl-tRNAs. Also deacylates mischarged glycyl-tRNA(Ala), protecting cells against glycine mischarging by AlaRS. Acts via tRNA-based rather than protein-based catalysis; rejects L-amino acids rather than detecting D-amino acids in the active site. By recycling D-aminoacyl-tRNA to D-amino acids and free tRNA molecules, this enzyme counteracts the toxicity associated with the formation of D-aminoacyl-tRNA entities in vivo and helps enforce protein L-homochirality.</text>
</comment>
<comment type="catalytic activity">
    <reaction evidence="1">
        <text>glycyl-tRNA(Ala) + H2O = tRNA(Ala) + glycine + H(+)</text>
        <dbReference type="Rhea" id="RHEA:53744"/>
        <dbReference type="Rhea" id="RHEA-COMP:9657"/>
        <dbReference type="Rhea" id="RHEA-COMP:13640"/>
        <dbReference type="ChEBI" id="CHEBI:15377"/>
        <dbReference type="ChEBI" id="CHEBI:15378"/>
        <dbReference type="ChEBI" id="CHEBI:57305"/>
        <dbReference type="ChEBI" id="CHEBI:78442"/>
        <dbReference type="ChEBI" id="CHEBI:78522"/>
        <dbReference type="EC" id="3.1.1.96"/>
    </reaction>
</comment>
<comment type="catalytic activity">
    <reaction evidence="1">
        <text>a D-aminoacyl-tRNA + H2O = a tRNA + a D-alpha-amino acid + H(+)</text>
        <dbReference type="Rhea" id="RHEA:13953"/>
        <dbReference type="Rhea" id="RHEA-COMP:10123"/>
        <dbReference type="Rhea" id="RHEA-COMP:10124"/>
        <dbReference type="ChEBI" id="CHEBI:15377"/>
        <dbReference type="ChEBI" id="CHEBI:15378"/>
        <dbReference type="ChEBI" id="CHEBI:59871"/>
        <dbReference type="ChEBI" id="CHEBI:78442"/>
        <dbReference type="ChEBI" id="CHEBI:79333"/>
        <dbReference type="EC" id="3.1.1.96"/>
    </reaction>
</comment>
<comment type="subunit">
    <text evidence="1">Homodimer.</text>
</comment>
<comment type="subcellular location">
    <subcellularLocation>
        <location evidence="1">Cytoplasm</location>
    </subcellularLocation>
</comment>
<comment type="domain">
    <text evidence="1">A Gly-cisPro motif from one monomer fits into the active site of the other monomer to allow specific chiral rejection of L-amino acids.</text>
</comment>
<comment type="similarity">
    <text evidence="1">Belongs to the DTD family.</text>
</comment>
<reference key="1">
    <citation type="journal article" date="2009" name="J. Bacteriol.">
        <title>Complete genome sequence of Macrococcus caseolyticus strain JCSCS5402, reflecting the ancestral genome of the human-pathogenic staphylococci.</title>
        <authorList>
            <person name="Baba T."/>
            <person name="Kuwahara-Arai K."/>
            <person name="Uchiyama I."/>
            <person name="Takeuchi F."/>
            <person name="Ito T."/>
            <person name="Hiramatsu K."/>
        </authorList>
    </citation>
    <scope>NUCLEOTIDE SEQUENCE [LARGE SCALE GENOMIC DNA]</scope>
    <source>
        <strain>JCSC5402</strain>
    </source>
</reference>
<dbReference type="EC" id="3.1.1.96" evidence="1"/>
<dbReference type="EMBL" id="AP009484">
    <property type="protein sequence ID" value="BAH17977.1"/>
    <property type="molecule type" value="Genomic_DNA"/>
</dbReference>
<dbReference type="RefSeq" id="WP_012657175.1">
    <property type="nucleotide sequence ID" value="NC_011999.1"/>
</dbReference>
<dbReference type="SMR" id="B9E709"/>
<dbReference type="STRING" id="458233.MCCL_1270"/>
<dbReference type="GeneID" id="61128832"/>
<dbReference type="KEGG" id="mcl:MCCL_1270"/>
<dbReference type="eggNOG" id="COG1490">
    <property type="taxonomic scope" value="Bacteria"/>
</dbReference>
<dbReference type="HOGENOM" id="CLU_076901_1_0_9"/>
<dbReference type="OrthoDB" id="9801395at2"/>
<dbReference type="Proteomes" id="UP000001383">
    <property type="component" value="Chromosome"/>
</dbReference>
<dbReference type="GO" id="GO:0005737">
    <property type="term" value="C:cytoplasm"/>
    <property type="evidence" value="ECO:0007669"/>
    <property type="project" value="UniProtKB-SubCell"/>
</dbReference>
<dbReference type="GO" id="GO:0051500">
    <property type="term" value="F:D-tyrosyl-tRNA(Tyr) deacylase activity"/>
    <property type="evidence" value="ECO:0007669"/>
    <property type="project" value="TreeGrafter"/>
</dbReference>
<dbReference type="GO" id="GO:0106026">
    <property type="term" value="F:Gly-tRNA(Ala) deacylase activity"/>
    <property type="evidence" value="ECO:0007669"/>
    <property type="project" value="UniProtKB-UniRule"/>
</dbReference>
<dbReference type="GO" id="GO:0043908">
    <property type="term" value="F:Ser(Gly)-tRNA(Ala) hydrolase activity"/>
    <property type="evidence" value="ECO:0007669"/>
    <property type="project" value="UniProtKB-UniRule"/>
</dbReference>
<dbReference type="GO" id="GO:0000049">
    <property type="term" value="F:tRNA binding"/>
    <property type="evidence" value="ECO:0007669"/>
    <property type="project" value="UniProtKB-UniRule"/>
</dbReference>
<dbReference type="GO" id="GO:0019478">
    <property type="term" value="P:D-amino acid catabolic process"/>
    <property type="evidence" value="ECO:0007669"/>
    <property type="project" value="UniProtKB-UniRule"/>
</dbReference>
<dbReference type="FunFam" id="3.50.80.10:FF:000001">
    <property type="entry name" value="D-aminoacyl-tRNA deacylase"/>
    <property type="match status" value="1"/>
</dbReference>
<dbReference type="Gene3D" id="3.50.80.10">
    <property type="entry name" value="D-tyrosyl-tRNA(Tyr) deacylase"/>
    <property type="match status" value="1"/>
</dbReference>
<dbReference type="HAMAP" id="MF_00518">
    <property type="entry name" value="Deacylase_Dtd"/>
    <property type="match status" value="1"/>
</dbReference>
<dbReference type="InterPro" id="IPR003732">
    <property type="entry name" value="Daa-tRNA_deacyls_DTD"/>
</dbReference>
<dbReference type="InterPro" id="IPR023509">
    <property type="entry name" value="DTD-like_sf"/>
</dbReference>
<dbReference type="NCBIfam" id="TIGR00256">
    <property type="entry name" value="D-aminoacyl-tRNA deacylase"/>
    <property type="match status" value="1"/>
</dbReference>
<dbReference type="PANTHER" id="PTHR10472:SF5">
    <property type="entry name" value="D-AMINOACYL-TRNA DEACYLASE 1"/>
    <property type="match status" value="1"/>
</dbReference>
<dbReference type="PANTHER" id="PTHR10472">
    <property type="entry name" value="D-TYROSYL-TRNA TYR DEACYLASE"/>
    <property type="match status" value="1"/>
</dbReference>
<dbReference type="Pfam" id="PF02580">
    <property type="entry name" value="Tyr_Deacylase"/>
    <property type="match status" value="1"/>
</dbReference>
<dbReference type="SUPFAM" id="SSF69500">
    <property type="entry name" value="DTD-like"/>
    <property type="match status" value="1"/>
</dbReference>
<gene>
    <name evidence="1" type="primary">dtd</name>
    <name type="ordered locus">MCCL_1270</name>
</gene>
<evidence type="ECO:0000255" key="1">
    <source>
        <dbReference type="HAMAP-Rule" id="MF_00518"/>
    </source>
</evidence>
<name>DTD_MACCJ</name>
<protein>
    <recommendedName>
        <fullName evidence="1">D-aminoacyl-tRNA deacylase</fullName>
        <shortName evidence="1">DTD</shortName>
        <ecNumber evidence="1">3.1.1.96</ecNumber>
    </recommendedName>
    <alternativeName>
        <fullName evidence="1">Gly-tRNA(Ala) deacylase</fullName>
    </alternativeName>
</protein>
<sequence length="150" mass="16622">MRVLVQRVKEASVKSGDYYGSVQKGLLLLVGVHELSTESDADALADKIVKSRIFEDDAGKMNLSVQDIAGEILSISQFTLYADVKKGNRPSFTKAMQPQKAEQIYHYFNTQLKNKGLKVVQGCFGEMMDIALINEGPVTIMYESKDGKLV</sequence>
<keyword id="KW-0963">Cytoplasm</keyword>
<keyword id="KW-0378">Hydrolase</keyword>
<keyword id="KW-1185">Reference proteome</keyword>
<keyword id="KW-0694">RNA-binding</keyword>
<keyword id="KW-0820">tRNA-binding</keyword>
<feature type="chain" id="PRO_1000146203" description="D-aminoacyl-tRNA deacylase">
    <location>
        <begin position="1"/>
        <end position="150"/>
    </location>
</feature>
<feature type="short sequence motif" description="Gly-cisPro motif, important for rejection of L-amino acids" evidence="1">
    <location>
        <begin position="136"/>
        <end position="137"/>
    </location>
</feature>
<proteinExistence type="inferred from homology"/>